<name>HEM1_STAAM</name>
<comment type="function">
    <text evidence="1">Catalyzes the NADPH-dependent reduction of glutamyl-tRNA(Glu) to glutamate 1-semialdehyde (GSA).</text>
</comment>
<comment type="catalytic activity">
    <reaction evidence="1">
        <text>(S)-4-amino-5-oxopentanoate + tRNA(Glu) + NADP(+) = L-glutamyl-tRNA(Glu) + NADPH + H(+)</text>
        <dbReference type="Rhea" id="RHEA:12344"/>
        <dbReference type="Rhea" id="RHEA-COMP:9663"/>
        <dbReference type="Rhea" id="RHEA-COMP:9680"/>
        <dbReference type="ChEBI" id="CHEBI:15378"/>
        <dbReference type="ChEBI" id="CHEBI:57501"/>
        <dbReference type="ChEBI" id="CHEBI:57783"/>
        <dbReference type="ChEBI" id="CHEBI:58349"/>
        <dbReference type="ChEBI" id="CHEBI:78442"/>
        <dbReference type="ChEBI" id="CHEBI:78520"/>
        <dbReference type="EC" id="1.2.1.70"/>
    </reaction>
</comment>
<comment type="pathway">
    <text evidence="1">Porphyrin-containing compound metabolism; protoporphyrin-IX biosynthesis; 5-aminolevulinate from L-glutamyl-tRNA(Glu): step 1/2.</text>
</comment>
<comment type="subunit">
    <text evidence="1">Homodimer.</text>
</comment>
<comment type="domain">
    <text evidence="1">Possesses an unusual extended V-shaped dimeric structure with each monomer consisting of three distinct domains arranged along a curved 'spinal' alpha-helix. The N-terminal catalytic domain specifically recognizes the glutamate moiety of the substrate. The second domain is the NADPH-binding domain, and the third C-terminal domain is responsible for dimerization.</text>
</comment>
<comment type="miscellaneous">
    <text evidence="1">During catalysis, the active site Cys acts as a nucleophile attacking the alpha-carbonyl group of tRNA-bound glutamate with the formation of a thioester intermediate between enzyme and glutamate, and the concomitant release of tRNA(Glu). The thioester intermediate is finally reduced by direct hydride transfer from NADPH, to form the product GSA.</text>
</comment>
<comment type="similarity">
    <text evidence="1">Belongs to the glutamyl-tRNA reductase family.</text>
</comment>
<reference key="1">
    <citation type="journal article" date="2001" name="Lancet">
        <title>Whole genome sequencing of meticillin-resistant Staphylococcus aureus.</title>
        <authorList>
            <person name="Kuroda M."/>
            <person name="Ohta T."/>
            <person name="Uchiyama I."/>
            <person name="Baba T."/>
            <person name="Yuzawa H."/>
            <person name="Kobayashi I."/>
            <person name="Cui L."/>
            <person name="Oguchi A."/>
            <person name="Aoki K."/>
            <person name="Nagai Y."/>
            <person name="Lian J.-Q."/>
            <person name="Ito T."/>
            <person name="Kanamori M."/>
            <person name="Matsumaru H."/>
            <person name="Maruyama A."/>
            <person name="Murakami H."/>
            <person name="Hosoyama A."/>
            <person name="Mizutani-Ui Y."/>
            <person name="Takahashi N.K."/>
            <person name="Sawano T."/>
            <person name="Inoue R."/>
            <person name="Kaito C."/>
            <person name="Sekimizu K."/>
            <person name="Hirakawa H."/>
            <person name="Kuhara S."/>
            <person name="Goto S."/>
            <person name="Yabuzaki J."/>
            <person name="Kanehisa M."/>
            <person name="Yamashita A."/>
            <person name="Oshima K."/>
            <person name="Furuya K."/>
            <person name="Yoshino C."/>
            <person name="Shiba T."/>
            <person name="Hattori M."/>
            <person name="Ogasawara N."/>
            <person name="Hayashi H."/>
            <person name="Hiramatsu K."/>
        </authorList>
    </citation>
    <scope>NUCLEOTIDE SEQUENCE [LARGE SCALE GENOMIC DNA]</scope>
    <source>
        <strain>Mu50 / ATCC 700699</strain>
    </source>
</reference>
<sequence>MHFIAISINHRTADVALREQVAFRDDALRIAHEDLYETKSILENVILSTCNRTEVYAVVDQIHTGRYYIQRFLARAFGFEVDDIKAMSEVKVGDEAVEHLLRVTSGLDSIVLGETQILGQIRDAFFLAQSTGTTGTIFNHLFKQAITFAKRAHNETDIADNAVSVSYAAVELAKKVFGKLKSKQAIIIGAGEMSELSLLNLLGSGITDITVVNRTIENAMKLAAKHQVKYDELSSLPNLLESADIVISSTSAQSYIITNEMIERIAENRKQDSLVLIDIAVPRDIEPGISAITNIFNYDVDDLKGLVDANLRERQLAAATISEQIPAEIHAHNEWISMLGVVPVIRALREKAMAIQAETMDSIDRKLPGLSERERKIISKHTKSIINQMLKDPIKQAKELSSDKKSNEKLELFQNIFDIEAECPHEQAKQQKESKVKEISARRIFSFE</sequence>
<keyword id="KW-0521">NADP</keyword>
<keyword id="KW-0560">Oxidoreductase</keyword>
<keyword id="KW-0627">Porphyrin biosynthesis</keyword>
<dbReference type="EC" id="1.2.1.70" evidence="1"/>
<dbReference type="EMBL" id="BA000017">
    <property type="protein sequence ID" value="BAB57834.1"/>
    <property type="molecule type" value="Genomic_DNA"/>
</dbReference>
<dbReference type="RefSeq" id="WP_000545451.1">
    <property type="nucleotide sequence ID" value="NC_002758.2"/>
</dbReference>
<dbReference type="SMR" id="P64330"/>
<dbReference type="KEGG" id="sav:SAV1672"/>
<dbReference type="HOGENOM" id="CLU_035113_2_2_9"/>
<dbReference type="PhylomeDB" id="P64330"/>
<dbReference type="UniPathway" id="UPA00251">
    <property type="reaction ID" value="UER00316"/>
</dbReference>
<dbReference type="Proteomes" id="UP000002481">
    <property type="component" value="Chromosome"/>
</dbReference>
<dbReference type="GO" id="GO:0008883">
    <property type="term" value="F:glutamyl-tRNA reductase activity"/>
    <property type="evidence" value="ECO:0007669"/>
    <property type="project" value="UniProtKB-UniRule"/>
</dbReference>
<dbReference type="GO" id="GO:0050661">
    <property type="term" value="F:NADP binding"/>
    <property type="evidence" value="ECO:0007669"/>
    <property type="project" value="InterPro"/>
</dbReference>
<dbReference type="GO" id="GO:0006782">
    <property type="term" value="P:protoporphyrinogen IX biosynthetic process"/>
    <property type="evidence" value="ECO:0007669"/>
    <property type="project" value="UniProtKB-UniRule"/>
</dbReference>
<dbReference type="CDD" id="cd05213">
    <property type="entry name" value="NAD_bind_Glutamyl_tRNA_reduct"/>
    <property type="match status" value="1"/>
</dbReference>
<dbReference type="FunFam" id="3.30.460.30:FF:000001">
    <property type="entry name" value="Glutamyl-tRNA reductase"/>
    <property type="match status" value="1"/>
</dbReference>
<dbReference type="FunFam" id="3.40.50.720:FF:000031">
    <property type="entry name" value="Glutamyl-tRNA reductase"/>
    <property type="match status" value="1"/>
</dbReference>
<dbReference type="Gene3D" id="3.30.460.30">
    <property type="entry name" value="Glutamyl-tRNA reductase, N-terminal domain"/>
    <property type="match status" value="1"/>
</dbReference>
<dbReference type="Gene3D" id="3.40.50.720">
    <property type="entry name" value="NAD(P)-binding Rossmann-like Domain"/>
    <property type="match status" value="1"/>
</dbReference>
<dbReference type="HAMAP" id="MF_00087">
    <property type="entry name" value="Glu_tRNA_reductase"/>
    <property type="match status" value="1"/>
</dbReference>
<dbReference type="InterPro" id="IPR000343">
    <property type="entry name" value="4pyrrol_synth_GluRdtase"/>
</dbReference>
<dbReference type="InterPro" id="IPR015896">
    <property type="entry name" value="4pyrrol_synth_GluRdtase_dimer"/>
</dbReference>
<dbReference type="InterPro" id="IPR015895">
    <property type="entry name" value="4pyrrol_synth_GluRdtase_N"/>
</dbReference>
<dbReference type="InterPro" id="IPR018214">
    <property type="entry name" value="GluRdtase_CS"/>
</dbReference>
<dbReference type="InterPro" id="IPR036453">
    <property type="entry name" value="GluRdtase_dimer_dom_sf"/>
</dbReference>
<dbReference type="InterPro" id="IPR036343">
    <property type="entry name" value="GluRdtase_N_sf"/>
</dbReference>
<dbReference type="InterPro" id="IPR036291">
    <property type="entry name" value="NAD(P)-bd_dom_sf"/>
</dbReference>
<dbReference type="InterPro" id="IPR006151">
    <property type="entry name" value="Shikm_DH/Glu-tRNA_Rdtase"/>
</dbReference>
<dbReference type="NCBIfam" id="TIGR01035">
    <property type="entry name" value="hemA"/>
    <property type="match status" value="1"/>
</dbReference>
<dbReference type="PANTHER" id="PTHR43120">
    <property type="entry name" value="GLUTAMYL-TRNA REDUCTASE 1, CHLOROPLASTIC"/>
    <property type="match status" value="1"/>
</dbReference>
<dbReference type="PANTHER" id="PTHR43120:SF1">
    <property type="entry name" value="GLUTAMYL-TRNA REDUCTASE 1, CHLOROPLASTIC"/>
    <property type="match status" value="1"/>
</dbReference>
<dbReference type="Pfam" id="PF00745">
    <property type="entry name" value="GlutR_dimer"/>
    <property type="match status" value="1"/>
</dbReference>
<dbReference type="Pfam" id="PF05201">
    <property type="entry name" value="GlutR_N"/>
    <property type="match status" value="1"/>
</dbReference>
<dbReference type="Pfam" id="PF01488">
    <property type="entry name" value="Shikimate_DH"/>
    <property type="match status" value="1"/>
</dbReference>
<dbReference type="PIRSF" id="PIRSF000445">
    <property type="entry name" value="4pyrrol_synth_GluRdtase"/>
    <property type="match status" value="1"/>
</dbReference>
<dbReference type="SUPFAM" id="SSF69742">
    <property type="entry name" value="Glutamyl tRNA-reductase catalytic, N-terminal domain"/>
    <property type="match status" value="1"/>
</dbReference>
<dbReference type="SUPFAM" id="SSF69075">
    <property type="entry name" value="Glutamyl tRNA-reductase dimerization domain"/>
    <property type="match status" value="1"/>
</dbReference>
<dbReference type="SUPFAM" id="SSF51735">
    <property type="entry name" value="NAD(P)-binding Rossmann-fold domains"/>
    <property type="match status" value="1"/>
</dbReference>
<dbReference type="PROSITE" id="PS00747">
    <property type="entry name" value="GLUTR"/>
    <property type="match status" value="1"/>
</dbReference>
<organism>
    <name type="scientific">Staphylococcus aureus (strain Mu50 / ATCC 700699)</name>
    <dbReference type="NCBI Taxonomy" id="158878"/>
    <lineage>
        <taxon>Bacteria</taxon>
        <taxon>Bacillati</taxon>
        <taxon>Bacillota</taxon>
        <taxon>Bacilli</taxon>
        <taxon>Bacillales</taxon>
        <taxon>Staphylococcaceae</taxon>
        <taxon>Staphylococcus</taxon>
    </lineage>
</organism>
<gene>
    <name evidence="1" type="primary">hemA</name>
    <name type="ordered locus">SAV1672</name>
</gene>
<proteinExistence type="inferred from homology"/>
<evidence type="ECO:0000255" key="1">
    <source>
        <dbReference type="HAMAP-Rule" id="MF_00087"/>
    </source>
</evidence>
<accession>P64330</accession>
<accession>Q99TI9</accession>
<feature type="chain" id="PRO_0000114068" description="Glutamyl-tRNA reductase">
    <location>
        <begin position="1"/>
        <end position="448"/>
    </location>
</feature>
<feature type="active site" description="Nucleophile" evidence="1">
    <location>
        <position position="50"/>
    </location>
</feature>
<feature type="binding site" evidence="1">
    <location>
        <begin position="49"/>
        <end position="52"/>
    </location>
    <ligand>
        <name>substrate</name>
    </ligand>
</feature>
<feature type="binding site" evidence="1">
    <location>
        <position position="109"/>
    </location>
    <ligand>
        <name>substrate</name>
    </ligand>
</feature>
<feature type="binding site" evidence="1">
    <location>
        <begin position="114"/>
        <end position="116"/>
    </location>
    <ligand>
        <name>substrate</name>
    </ligand>
</feature>
<feature type="binding site" evidence="1">
    <location>
        <position position="120"/>
    </location>
    <ligand>
        <name>substrate</name>
    </ligand>
</feature>
<feature type="binding site" evidence="1">
    <location>
        <begin position="189"/>
        <end position="194"/>
    </location>
    <ligand>
        <name>NADP(+)</name>
        <dbReference type="ChEBI" id="CHEBI:58349"/>
    </ligand>
</feature>
<feature type="site" description="Important for activity" evidence="1">
    <location>
        <position position="99"/>
    </location>
</feature>
<protein>
    <recommendedName>
        <fullName evidence="1">Glutamyl-tRNA reductase</fullName>
        <shortName evidence="1">GluTR</shortName>
        <ecNumber evidence="1">1.2.1.70</ecNumber>
    </recommendedName>
</protein>